<evidence type="ECO:0000255" key="1">
    <source>
        <dbReference type="HAMAP-Rule" id="MF_01062"/>
    </source>
</evidence>
<comment type="function">
    <text evidence="1">Bifunctional serine/threonine kinase and phosphorylase involved in the regulation of the phosphoenolpyruvate synthase (PEPS) by catalyzing its phosphorylation/dephosphorylation.</text>
</comment>
<comment type="catalytic activity">
    <reaction evidence="1">
        <text>[pyruvate, water dikinase] + ADP = [pyruvate, water dikinase]-phosphate + AMP + H(+)</text>
        <dbReference type="Rhea" id="RHEA:46020"/>
        <dbReference type="Rhea" id="RHEA-COMP:11425"/>
        <dbReference type="Rhea" id="RHEA-COMP:11426"/>
        <dbReference type="ChEBI" id="CHEBI:15378"/>
        <dbReference type="ChEBI" id="CHEBI:43176"/>
        <dbReference type="ChEBI" id="CHEBI:68546"/>
        <dbReference type="ChEBI" id="CHEBI:456215"/>
        <dbReference type="ChEBI" id="CHEBI:456216"/>
        <dbReference type="EC" id="2.7.11.33"/>
    </reaction>
</comment>
<comment type="catalytic activity">
    <reaction evidence="1">
        <text>[pyruvate, water dikinase]-phosphate + phosphate + H(+) = [pyruvate, water dikinase] + diphosphate</text>
        <dbReference type="Rhea" id="RHEA:48580"/>
        <dbReference type="Rhea" id="RHEA-COMP:11425"/>
        <dbReference type="Rhea" id="RHEA-COMP:11426"/>
        <dbReference type="ChEBI" id="CHEBI:15378"/>
        <dbReference type="ChEBI" id="CHEBI:33019"/>
        <dbReference type="ChEBI" id="CHEBI:43176"/>
        <dbReference type="ChEBI" id="CHEBI:43474"/>
        <dbReference type="ChEBI" id="CHEBI:68546"/>
        <dbReference type="EC" id="2.7.4.28"/>
    </reaction>
</comment>
<comment type="similarity">
    <text evidence="1">Belongs to the pyruvate, phosphate/water dikinase regulatory protein family. PSRP subfamily.</text>
</comment>
<reference key="1">
    <citation type="journal article" date="2009" name="PLoS Genet.">
        <title>Organised genome dynamics in the Escherichia coli species results in highly diverse adaptive paths.</title>
        <authorList>
            <person name="Touchon M."/>
            <person name="Hoede C."/>
            <person name="Tenaillon O."/>
            <person name="Barbe V."/>
            <person name="Baeriswyl S."/>
            <person name="Bidet P."/>
            <person name="Bingen E."/>
            <person name="Bonacorsi S."/>
            <person name="Bouchier C."/>
            <person name="Bouvet O."/>
            <person name="Calteau A."/>
            <person name="Chiapello H."/>
            <person name="Clermont O."/>
            <person name="Cruveiller S."/>
            <person name="Danchin A."/>
            <person name="Diard M."/>
            <person name="Dossat C."/>
            <person name="Karoui M.E."/>
            <person name="Frapy E."/>
            <person name="Garry L."/>
            <person name="Ghigo J.M."/>
            <person name="Gilles A.M."/>
            <person name="Johnson J."/>
            <person name="Le Bouguenec C."/>
            <person name="Lescat M."/>
            <person name="Mangenot S."/>
            <person name="Martinez-Jehanne V."/>
            <person name="Matic I."/>
            <person name="Nassif X."/>
            <person name="Oztas S."/>
            <person name="Petit M.A."/>
            <person name="Pichon C."/>
            <person name="Rouy Z."/>
            <person name="Ruf C.S."/>
            <person name="Schneider D."/>
            <person name="Tourret J."/>
            <person name="Vacherie B."/>
            <person name="Vallenet D."/>
            <person name="Medigue C."/>
            <person name="Rocha E.P.C."/>
            <person name="Denamur E."/>
        </authorList>
    </citation>
    <scope>NUCLEOTIDE SEQUENCE [LARGE SCALE GENOMIC DNA]</scope>
    <source>
        <strain>ED1a</strain>
    </source>
</reference>
<sequence>MDNAVDRHVFYISDGTAITAEVLGHAVMSQFPVTISSITLPFVENESRARAVKDQIDAIYHQTGVRPLVFYSIVLPEIRAIILQSEGFCQDIVQALVAPLQQEMKLDPTPIAHRTHGLNPNNLNKYDARIAAIDYTLAHDDGISLRNLDQAQVILLGVSRCGKTPTSLYLAMQFGIRAANYPFIADDMDNLVLPASLKPLQHKLFGLTIDPERLAAIREERRENSRYASLRQCRMEVAEVEALYRKNQIPWINSTNYSVEEIATKILDIMGLSRRMY</sequence>
<organism>
    <name type="scientific">Escherichia coli O81 (strain ED1a)</name>
    <dbReference type="NCBI Taxonomy" id="585397"/>
    <lineage>
        <taxon>Bacteria</taxon>
        <taxon>Pseudomonadati</taxon>
        <taxon>Pseudomonadota</taxon>
        <taxon>Gammaproteobacteria</taxon>
        <taxon>Enterobacterales</taxon>
        <taxon>Enterobacteriaceae</taxon>
        <taxon>Escherichia</taxon>
    </lineage>
</organism>
<proteinExistence type="inferred from homology"/>
<gene>
    <name evidence="1" type="primary">ppsR</name>
    <name type="ordered locus">ECED1_1905</name>
</gene>
<protein>
    <recommendedName>
        <fullName evidence="1">Phosphoenolpyruvate synthase regulatory protein</fullName>
        <shortName evidence="1">PEP synthase regulatory protein</shortName>
        <shortName evidence="1">PSRP</shortName>
        <ecNumber evidence="1">2.7.11.33</ecNumber>
        <ecNumber evidence="1">2.7.4.28</ecNumber>
    </recommendedName>
    <alternativeName>
        <fullName evidence="1">Pyruvate, water dikinase regulatory protein</fullName>
    </alternativeName>
</protein>
<feature type="chain" id="PRO_1000149709" description="Phosphoenolpyruvate synthase regulatory protein">
    <location>
        <begin position="1"/>
        <end position="277"/>
    </location>
</feature>
<feature type="binding site" evidence="1">
    <location>
        <begin position="157"/>
        <end position="164"/>
    </location>
    <ligand>
        <name>ADP</name>
        <dbReference type="ChEBI" id="CHEBI:456216"/>
    </ligand>
</feature>
<keyword id="KW-0418">Kinase</keyword>
<keyword id="KW-0547">Nucleotide-binding</keyword>
<keyword id="KW-0723">Serine/threonine-protein kinase</keyword>
<keyword id="KW-0808">Transferase</keyword>
<accession>B7MVI2</accession>
<dbReference type="EC" id="2.7.11.33" evidence="1"/>
<dbReference type="EC" id="2.7.4.28" evidence="1"/>
<dbReference type="EMBL" id="CU928162">
    <property type="protein sequence ID" value="CAR08098.2"/>
    <property type="molecule type" value="Genomic_DNA"/>
</dbReference>
<dbReference type="RefSeq" id="WP_000368046.1">
    <property type="nucleotide sequence ID" value="NC_011745.1"/>
</dbReference>
<dbReference type="SMR" id="B7MVI2"/>
<dbReference type="GeneID" id="93775866"/>
<dbReference type="KEGG" id="ecq:ECED1_1905"/>
<dbReference type="HOGENOM" id="CLU_046206_1_0_6"/>
<dbReference type="Proteomes" id="UP000000748">
    <property type="component" value="Chromosome"/>
</dbReference>
<dbReference type="GO" id="GO:0043531">
    <property type="term" value="F:ADP binding"/>
    <property type="evidence" value="ECO:0007669"/>
    <property type="project" value="UniProtKB-UniRule"/>
</dbReference>
<dbReference type="GO" id="GO:0005524">
    <property type="term" value="F:ATP binding"/>
    <property type="evidence" value="ECO:0007669"/>
    <property type="project" value="InterPro"/>
</dbReference>
<dbReference type="GO" id="GO:0016776">
    <property type="term" value="F:phosphotransferase activity, phosphate group as acceptor"/>
    <property type="evidence" value="ECO:0007669"/>
    <property type="project" value="UniProtKB-UniRule"/>
</dbReference>
<dbReference type="GO" id="GO:0004674">
    <property type="term" value="F:protein serine/threonine kinase activity"/>
    <property type="evidence" value="ECO:0007669"/>
    <property type="project" value="UniProtKB-UniRule"/>
</dbReference>
<dbReference type="HAMAP" id="MF_01062">
    <property type="entry name" value="PSRP"/>
    <property type="match status" value="1"/>
</dbReference>
<dbReference type="InterPro" id="IPR005177">
    <property type="entry name" value="Kinase-pyrophosphorylase"/>
</dbReference>
<dbReference type="InterPro" id="IPR026530">
    <property type="entry name" value="PSRP"/>
</dbReference>
<dbReference type="NCBIfam" id="NF003742">
    <property type="entry name" value="PRK05339.1"/>
    <property type="match status" value="1"/>
</dbReference>
<dbReference type="PANTHER" id="PTHR31756">
    <property type="entry name" value="PYRUVATE, PHOSPHATE DIKINASE REGULATORY PROTEIN 1, CHLOROPLASTIC"/>
    <property type="match status" value="1"/>
</dbReference>
<dbReference type="PANTHER" id="PTHR31756:SF3">
    <property type="entry name" value="PYRUVATE, PHOSPHATE DIKINASE REGULATORY PROTEIN 1, CHLOROPLASTIC"/>
    <property type="match status" value="1"/>
</dbReference>
<dbReference type="Pfam" id="PF03618">
    <property type="entry name" value="Kinase-PPPase"/>
    <property type="match status" value="1"/>
</dbReference>
<name>PSRP_ECO81</name>